<name>5054R_ASFM2</name>
<dbReference type="EMBL" id="AY261361">
    <property type="status" value="NOT_ANNOTATED_CDS"/>
    <property type="molecule type" value="Genomic_DNA"/>
</dbReference>
<dbReference type="SMR" id="P0C9T3"/>
<dbReference type="Proteomes" id="UP000000860">
    <property type="component" value="Segment"/>
</dbReference>
<dbReference type="InterPro" id="IPR004858">
    <property type="entry name" value="MGF_505"/>
</dbReference>
<dbReference type="Pfam" id="PF03158">
    <property type="entry name" value="DUF249"/>
    <property type="match status" value="1"/>
</dbReference>
<organismHost>
    <name type="scientific">Ornithodoros</name>
    <name type="common">relapsing fever ticks</name>
    <dbReference type="NCBI Taxonomy" id="6937"/>
</organismHost>
<organismHost>
    <name type="scientific">Phacochoerus aethiopicus</name>
    <name type="common">Warthog</name>
    <dbReference type="NCBI Taxonomy" id="85517"/>
</organismHost>
<organismHost>
    <name type="scientific">Phacochoerus africanus</name>
    <name type="common">Warthog</name>
    <dbReference type="NCBI Taxonomy" id="41426"/>
</organismHost>
<organismHost>
    <name type="scientific">Potamochoerus larvatus</name>
    <name type="common">Bushpig</name>
    <dbReference type="NCBI Taxonomy" id="273792"/>
</organismHost>
<organismHost>
    <name type="scientific">Sus scrofa</name>
    <name type="common">Pig</name>
    <dbReference type="NCBI Taxonomy" id="9823"/>
</organismHost>
<keyword id="KW-0244">Early protein</keyword>
<feature type="chain" id="PRO_0000373329" description="Protein MGF 505-4R">
    <location>
        <begin position="1"/>
        <end position="506"/>
    </location>
</feature>
<protein>
    <recommendedName>
        <fullName>Protein MGF 505-4R</fullName>
    </recommendedName>
</protein>
<sequence length="506" mass="59423">MFSLQDICRKHLFLLPSSFDEYILQALGLYWEKHGSLQRIRKDAVFVQRNIVLSTNEALRIAASEGNERVIKLLLSWEGDFHYVIIGALEGDRYDLIHKYVSQIKDYHNILSLIQNANTFEKCHHLSNSNMWCLIQNAIKYNMLSILQKHKNCLTHEGENQELFEMACEEQKYDIVLWIGQTLMVNEPESIFDTALARIDFSLLTIGYRLLFDNKMSCIDIHDEEDLTSSLTEHLEKAAIKGCFFFMLETLKHGGNVNMAVLSKAVEYNHRKILDYFIRRQKCLSREEIEKLLLSGISNGASIKTLNLLLSYLNYSVKHIIRKIVQYVIKEGDFTIIVVLKRKKINLVEPVLSGFMDDYYSYCFIKQFIDEFDIRPEKIIKMAARKGKLNMIIEFFNEIYPHKDDLKTMFKFLKNLVYTMKHKKGKEVLIGLIHKIYQSIHLENKEMFNLLKFYVMYNANIQFIALCKDCFKLAGFKPFLLECLDIAIKRNYPDIIQNIKLLLKYE</sequence>
<organism>
    <name type="scientific">African swine fever virus (isolate Tick/Malawi/Lil 20-1/1983)</name>
    <name type="common">ASFV</name>
    <dbReference type="NCBI Taxonomy" id="10500"/>
    <lineage>
        <taxon>Viruses</taxon>
        <taxon>Varidnaviria</taxon>
        <taxon>Bamfordvirae</taxon>
        <taxon>Nucleocytoviricota</taxon>
        <taxon>Pokkesviricetes</taxon>
        <taxon>Asfuvirales</taxon>
        <taxon>Asfarviridae</taxon>
        <taxon>Asfivirus</taxon>
        <taxon>African swine fever virus</taxon>
    </lineage>
</organism>
<comment type="function">
    <text evidence="1">Plays a role in virus cell tropism, and may be required for efficient virus replication in macrophages.</text>
</comment>
<comment type="induction">
    <text evidence="2">Expressed in the early phase of the viral replicative cycle.</text>
</comment>
<comment type="similarity">
    <text evidence="2">Belongs to the asfivirus MGF 505 family.</text>
</comment>
<accession>P0C9T3</accession>
<evidence type="ECO:0000250" key="1">
    <source>
        <dbReference type="UniProtKB" id="Q89768"/>
    </source>
</evidence>
<evidence type="ECO:0000305" key="2"/>
<proteinExistence type="inferred from homology"/>
<reference key="1">
    <citation type="submission" date="2003-03" db="EMBL/GenBank/DDBJ databases">
        <title>African swine fever virus genomes.</title>
        <authorList>
            <person name="Kutish G.F."/>
            <person name="Rock D.L."/>
        </authorList>
    </citation>
    <scope>NUCLEOTIDE SEQUENCE [LARGE SCALE GENOMIC DNA]</scope>
</reference>
<gene>
    <name type="ordered locus">Mal-037</name>
</gene>